<reference key="1">
    <citation type="journal article" date="2012" name="Sci. Rep.">
        <title>Genomic perspectives on the evolution of fungal entomopathogenicity in Beauveria bassiana.</title>
        <authorList>
            <person name="Xiao G."/>
            <person name="Ying S.-H."/>
            <person name="Zheng P."/>
            <person name="Wang Z.-L."/>
            <person name="Zhang S."/>
            <person name="Xie X.-Q."/>
            <person name="Shang Y."/>
            <person name="St Leger R.J."/>
            <person name="Zhao G.-P."/>
            <person name="Wang C."/>
            <person name="Feng M.-G."/>
        </authorList>
    </citation>
    <scope>NUCLEOTIDE SEQUENCE [LARGE SCALE GENOMIC DNA]</scope>
    <source>
        <strain>ARSEF 2860</strain>
    </source>
</reference>
<reference key="2">
    <citation type="journal article" date="2023" name="J. Invertebr. Pathol.">
        <title>Only one of three hydrophobins (Hyd1-3) contributes to conidial hydrophobicity and insect pathogenicity of Metarhizium robertsii.</title>
        <authorList>
            <person name="Zhang J.G."/>
            <person name="Xu S.Y."/>
            <person name="Ying S.H."/>
            <person name="Feng M.G."/>
        </authorList>
    </citation>
    <scope>IDENTIFICATION</scope>
</reference>
<reference key="3">
    <citation type="journal article" date="2025" name="Microbiol. Res.">
        <title>Deciphering roles of nine hydrophobins (Hyd1A-F and Hyd2A-C) in the asexual and insect-pathogenic lifecycles of Beauveria bassiana.</title>
        <authorList>
            <person name="Feng J.R."/>
            <person name="Li M."/>
            <person name="Ying S.H."/>
            <person name="Feng M.G."/>
        </authorList>
    </citation>
    <scope>FUNCTION</scope>
    <scope>SUBCELLULAR LOCATION</scope>
    <scope>DISRUPTION PHENOTYPE</scope>
</reference>
<feature type="signal peptide" evidence="2">
    <location>
        <begin position="1"/>
        <end position="15"/>
    </location>
</feature>
<feature type="chain" id="PRO_5013175393" description="Class II hydrophobin A">
    <location>
        <begin position="16"/>
        <end position="97"/>
    </location>
</feature>
<feature type="disulfide bond" evidence="1">
    <location>
        <begin position="30"/>
        <end position="79"/>
    </location>
</feature>
<feature type="disulfide bond" evidence="1">
    <location>
        <begin position="40"/>
        <end position="53"/>
    </location>
</feature>
<feature type="disulfide bond" evidence="1">
    <location>
        <begin position="80"/>
        <end position="91"/>
    </location>
</feature>
<name>HYD2A_BEAB2</name>
<organism>
    <name type="scientific">Beauveria bassiana (strain ARSEF 2860)</name>
    <name type="common">White muscardine disease fungus</name>
    <name type="synonym">Tritirachium shiotae</name>
    <dbReference type="NCBI Taxonomy" id="655819"/>
    <lineage>
        <taxon>Eukaryota</taxon>
        <taxon>Fungi</taxon>
        <taxon>Dikarya</taxon>
        <taxon>Ascomycota</taxon>
        <taxon>Pezizomycotina</taxon>
        <taxon>Sordariomycetes</taxon>
        <taxon>Hypocreomycetidae</taxon>
        <taxon>Hypocreales</taxon>
        <taxon>Cordycipitaceae</taxon>
        <taxon>Beauveria</taxon>
    </lineage>
</organism>
<comment type="function">
    <text evidence="3 7">Aerial growth, conidiation, and dispersal of filamentous fungi in the environment rely upon a capability of their secreting small amphipathic proteins called hydrophobins (HPBs) with low sequence identity. Class I can self-assemble into an outermost layer of rodlet bundles on aerial cell surfaces, conferring cellular hydrophobicity that supports fungal growth, development and dispersal; whereas Class II form highly ordered films at water-air interfaces through intermolecular interactions but contribute nothing to the rodlet structure (Probable). Hyd2A contributes to certain cell wall-related features, such as hydrophobicity but is not involved in cell wall-related events during fungal proliferation in host hemocoel (PubMed:39724799). Does not contribute to conidial hydrophobicity (PubMed:39724799). Involved in insect hemocoel colonization independent of cell hydrophobicity, as well as in the asexual development (PubMed:39724799).</text>
</comment>
<comment type="subcellular location">
    <subcellularLocation>
        <location evidence="3">Secreted</location>
    </subcellularLocation>
    <subcellularLocation>
        <location evidence="3">Secreted</location>
        <location evidence="3">Cell wall</location>
    </subcellularLocation>
    <subcellularLocation>
        <location evidence="3">Vacuole</location>
    </subcellularLocation>
    <subcellularLocation>
        <location evidence="3">Cytoplasmic vesicle</location>
    </subcellularLocation>
    <text evidence="3">Accumulates exclusively on the cell walls of aerial hyphae and conidia and in the vacuoles and vesicles of hyphae and blastospores.</text>
</comment>
<comment type="induction">
    <text evidence="3">Under normal conditions on SDAY medium (Sabouraud dextrose agar plus 1% yeast extract), hyd2A is up-regulated at transcriptional level during the first five days of incubation. Hyd1A is the most active at transcription level under normal culture conditions, followed by hyd1B, hyd1E, hyd2A and hyd2C in order.</text>
</comment>
<comment type="disruption phenotype">
    <text evidence="3">Compromises aerial conidiation and submerged blastospore production (PubMed:39724799). Does not affect radial growth and multiple stress responses (PubMed:39724799).</text>
</comment>
<comment type="similarity">
    <text evidence="6">Belongs to the cerato-ulmin hydrophobin family.</text>
</comment>
<accession>J4WDT5</accession>
<protein>
    <recommendedName>
        <fullName evidence="5">Class II hydrophobin A</fullName>
    </recommendedName>
</protein>
<dbReference type="EMBL" id="JH725155">
    <property type="protein sequence ID" value="EJP68175.1"/>
    <property type="molecule type" value="Genomic_DNA"/>
</dbReference>
<dbReference type="RefSeq" id="XP_008596390.1">
    <property type="nucleotide sequence ID" value="XM_008598168.1"/>
</dbReference>
<dbReference type="STRING" id="655819.J4WDT5"/>
<dbReference type="GeneID" id="19886083"/>
<dbReference type="HOGENOM" id="CLU_141181_2_2_1"/>
<dbReference type="InParanoid" id="J4WDT5"/>
<dbReference type="OrthoDB" id="10430at474943"/>
<dbReference type="Proteomes" id="UP000002762">
    <property type="component" value="Unassembled WGS sequence"/>
</dbReference>
<dbReference type="GO" id="GO:0005576">
    <property type="term" value="C:extracellular region"/>
    <property type="evidence" value="ECO:0007669"/>
    <property type="project" value="UniProtKB-KW"/>
</dbReference>
<dbReference type="CDD" id="cd23508">
    <property type="entry name" value="hydrophobin_II"/>
    <property type="match status" value="1"/>
</dbReference>
<dbReference type="Gene3D" id="3.20.120.10">
    <property type="entry name" value="Hydrophobin"/>
    <property type="match status" value="1"/>
</dbReference>
<dbReference type="InterPro" id="IPR010636">
    <property type="entry name" value="Cerato-ulmin_hydrophobin"/>
</dbReference>
<dbReference type="InterPro" id="IPR036686">
    <property type="entry name" value="Hydrophobin_sf"/>
</dbReference>
<dbReference type="PANTHER" id="PTHR42341">
    <property type="entry name" value="HYDROPHOBIN"/>
    <property type="match status" value="1"/>
</dbReference>
<dbReference type="PANTHER" id="PTHR42341:SF1">
    <property type="entry name" value="HYDROPHOBIN"/>
    <property type="match status" value="1"/>
</dbReference>
<dbReference type="Pfam" id="PF06766">
    <property type="entry name" value="Hydrophobin_2"/>
    <property type="match status" value="1"/>
</dbReference>
<dbReference type="SUPFAM" id="SSF101751">
    <property type="entry name" value="Hydrophobin II, HfbII"/>
    <property type="match status" value="1"/>
</dbReference>
<evidence type="ECO:0000250" key="1">
    <source>
        <dbReference type="UniProtKB" id="Q04571"/>
    </source>
</evidence>
<evidence type="ECO:0000255" key="2"/>
<evidence type="ECO:0000269" key="3">
    <source>
    </source>
</evidence>
<evidence type="ECO:0000303" key="4">
    <source>
    </source>
</evidence>
<evidence type="ECO:0000303" key="5">
    <source>
    </source>
</evidence>
<evidence type="ECO:0000305" key="6"/>
<evidence type="ECO:0000305" key="7">
    <source>
    </source>
</evidence>
<sequence length="97" mass="9986">MKSVVFASLIASALAVPTELAPRTDVSSLCPAGLYSVPQCCATDILGVARLDCKAPKQTPRNADEFKNICAKGGQQAACCVVPVAGQSLFCMTPVGI</sequence>
<proteinExistence type="evidence at transcript level"/>
<gene>
    <name evidence="5" type="primary">hyd2A</name>
    <name evidence="4" type="synonym">hyd3</name>
    <name type="ORF">BBA_03071</name>
</gene>
<keyword id="KW-0134">Cell wall</keyword>
<keyword id="KW-0968">Cytoplasmic vesicle</keyword>
<keyword id="KW-1015">Disulfide bond</keyword>
<keyword id="KW-1185">Reference proteome</keyword>
<keyword id="KW-0964">Secreted</keyword>
<keyword id="KW-0732">Signal</keyword>
<keyword id="KW-0926">Vacuole</keyword>